<dbReference type="EC" id="1.2.4.2" evidence="1"/>
<dbReference type="EMBL" id="AP006627">
    <property type="protein sequence ID" value="BAD64649.1"/>
    <property type="molecule type" value="Genomic_DNA"/>
</dbReference>
<dbReference type="RefSeq" id="WP_011246957.1">
    <property type="nucleotide sequence ID" value="NC_006582.1"/>
</dbReference>
<dbReference type="SMR" id="Q5WG56"/>
<dbReference type="STRING" id="66692.ABC2114"/>
<dbReference type="KEGG" id="bcl:ABC2114"/>
<dbReference type="eggNOG" id="COG0567">
    <property type="taxonomic scope" value="Bacteria"/>
</dbReference>
<dbReference type="HOGENOM" id="CLU_004709_1_0_9"/>
<dbReference type="OrthoDB" id="9759785at2"/>
<dbReference type="Proteomes" id="UP000001168">
    <property type="component" value="Chromosome"/>
</dbReference>
<dbReference type="GO" id="GO:0005829">
    <property type="term" value="C:cytosol"/>
    <property type="evidence" value="ECO:0007669"/>
    <property type="project" value="TreeGrafter"/>
</dbReference>
<dbReference type="GO" id="GO:0045252">
    <property type="term" value="C:oxoglutarate dehydrogenase complex"/>
    <property type="evidence" value="ECO:0007669"/>
    <property type="project" value="TreeGrafter"/>
</dbReference>
<dbReference type="GO" id="GO:0004591">
    <property type="term" value="F:oxoglutarate dehydrogenase (succinyl-transferring) activity"/>
    <property type="evidence" value="ECO:0007669"/>
    <property type="project" value="UniProtKB-UniRule"/>
</dbReference>
<dbReference type="GO" id="GO:0030976">
    <property type="term" value="F:thiamine pyrophosphate binding"/>
    <property type="evidence" value="ECO:0007669"/>
    <property type="project" value="UniProtKB-UniRule"/>
</dbReference>
<dbReference type="GO" id="GO:0006096">
    <property type="term" value="P:glycolytic process"/>
    <property type="evidence" value="ECO:0007669"/>
    <property type="project" value="UniProtKB-UniRule"/>
</dbReference>
<dbReference type="GO" id="GO:0006099">
    <property type="term" value="P:tricarboxylic acid cycle"/>
    <property type="evidence" value="ECO:0007669"/>
    <property type="project" value="TreeGrafter"/>
</dbReference>
<dbReference type="CDD" id="cd02016">
    <property type="entry name" value="TPP_E1_OGDC_like"/>
    <property type="match status" value="1"/>
</dbReference>
<dbReference type="FunFam" id="3.40.50.11610:FF:000002">
    <property type="entry name" value="2-oxoglutarate dehydrogenase E1 component"/>
    <property type="match status" value="1"/>
</dbReference>
<dbReference type="FunFam" id="3.40.50.970:FF:000036">
    <property type="entry name" value="2-oxoglutarate dehydrogenase E1 component"/>
    <property type="match status" value="1"/>
</dbReference>
<dbReference type="Gene3D" id="3.40.50.12470">
    <property type="match status" value="1"/>
</dbReference>
<dbReference type="Gene3D" id="3.40.50.970">
    <property type="match status" value="1"/>
</dbReference>
<dbReference type="Gene3D" id="3.40.50.11610">
    <property type="entry name" value="Multifunctional 2-oxoglutarate metabolism enzyme, C-terminal domain"/>
    <property type="match status" value="1"/>
</dbReference>
<dbReference type="HAMAP" id="MF_01169">
    <property type="entry name" value="SucA_OdhA"/>
    <property type="match status" value="1"/>
</dbReference>
<dbReference type="InterPro" id="IPR011603">
    <property type="entry name" value="2oxoglutarate_DH_E1"/>
</dbReference>
<dbReference type="InterPro" id="IPR023784">
    <property type="entry name" value="2oxoglutarate_DH_E1_bac"/>
</dbReference>
<dbReference type="InterPro" id="IPR001017">
    <property type="entry name" value="DH_E1"/>
</dbReference>
<dbReference type="InterPro" id="IPR042179">
    <property type="entry name" value="KGD_C_sf"/>
</dbReference>
<dbReference type="InterPro" id="IPR031717">
    <property type="entry name" value="ODO-1/KGD_C"/>
</dbReference>
<dbReference type="InterPro" id="IPR029061">
    <property type="entry name" value="THDP-binding"/>
</dbReference>
<dbReference type="InterPro" id="IPR005475">
    <property type="entry name" value="Transketolase-like_Pyr-bd"/>
</dbReference>
<dbReference type="NCBIfam" id="TIGR00239">
    <property type="entry name" value="2oxo_dh_E1"/>
    <property type="match status" value="1"/>
</dbReference>
<dbReference type="NCBIfam" id="NF006914">
    <property type="entry name" value="PRK09404.1"/>
    <property type="match status" value="1"/>
</dbReference>
<dbReference type="NCBIfam" id="NF008907">
    <property type="entry name" value="PRK12270.1"/>
    <property type="match status" value="1"/>
</dbReference>
<dbReference type="PANTHER" id="PTHR23152:SF4">
    <property type="entry name" value="2-OXOADIPATE DEHYDROGENASE COMPLEX COMPONENT E1"/>
    <property type="match status" value="1"/>
</dbReference>
<dbReference type="PANTHER" id="PTHR23152">
    <property type="entry name" value="2-OXOGLUTARATE DEHYDROGENASE"/>
    <property type="match status" value="1"/>
</dbReference>
<dbReference type="Pfam" id="PF00676">
    <property type="entry name" value="E1_dh"/>
    <property type="match status" value="1"/>
</dbReference>
<dbReference type="Pfam" id="PF16870">
    <property type="entry name" value="OxoGdeHyase_C"/>
    <property type="match status" value="1"/>
</dbReference>
<dbReference type="Pfam" id="PF02779">
    <property type="entry name" value="Transket_pyr"/>
    <property type="match status" value="1"/>
</dbReference>
<dbReference type="PIRSF" id="PIRSF000157">
    <property type="entry name" value="Oxoglu_dh_E1"/>
    <property type="match status" value="1"/>
</dbReference>
<dbReference type="SMART" id="SM00861">
    <property type="entry name" value="Transket_pyr"/>
    <property type="match status" value="1"/>
</dbReference>
<dbReference type="SUPFAM" id="SSF52518">
    <property type="entry name" value="Thiamin diphosphate-binding fold (THDP-binding)"/>
    <property type="match status" value="2"/>
</dbReference>
<comment type="function">
    <text evidence="1">E1 component of the 2-oxoglutarate dehydrogenase (OGDH) complex which catalyzes the decarboxylation of 2-oxoglutarate, the first step in the conversion of 2-oxoglutarate to succinyl-CoA and CO(2).</text>
</comment>
<comment type="catalytic activity">
    <reaction evidence="1">
        <text>N(6)-[(R)-lipoyl]-L-lysyl-[protein] + 2-oxoglutarate + H(+) = N(6)-[(R)-S(8)-succinyldihydrolipoyl]-L-lysyl-[protein] + CO2</text>
        <dbReference type="Rhea" id="RHEA:12188"/>
        <dbReference type="Rhea" id="RHEA-COMP:10474"/>
        <dbReference type="Rhea" id="RHEA-COMP:20092"/>
        <dbReference type="ChEBI" id="CHEBI:15378"/>
        <dbReference type="ChEBI" id="CHEBI:16526"/>
        <dbReference type="ChEBI" id="CHEBI:16810"/>
        <dbReference type="ChEBI" id="CHEBI:83099"/>
        <dbReference type="ChEBI" id="CHEBI:83120"/>
        <dbReference type="EC" id="1.2.4.2"/>
    </reaction>
</comment>
<comment type="cofactor">
    <cofactor evidence="1">
        <name>thiamine diphosphate</name>
        <dbReference type="ChEBI" id="CHEBI:58937"/>
    </cofactor>
</comment>
<comment type="subunit">
    <text evidence="1">Homodimer. Part of the 2-oxoglutarate dehydrogenase (OGDH) complex composed of E1 (2-oxoglutarate dehydrogenase), E2 (dihydrolipoamide succinyltransferase) and E3 (dihydrolipoamide dehydrogenase); the complex contains multiple copies of the three enzymatic components (E1, E2 and E3).</text>
</comment>
<comment type="similarity">
    <text evidence="1">Belongs to the alpha-ketoglutarate dehydrogenase family.</text>
</comment>
<protein>
    <recommendedName>
        <fullName evidence="1">2-oxoglutarate dehydrogenase E1 component</fullName>
        <ecNumber evidence="1">1.2.4.2</ecNumber>
    </recommendedName>
    <alternativeName>
        <fullName evidence="1">Alpha-ketoglutarate dehydrogenase</fullName>
    </alternativeName>
</protein>
<sequence length="943" mass="106584">MSSKEHSPEKPWRGFYGPNLGAVIELYDQYVEDPNSVDEQTRAHFEKWGPPALEENVSSSNAKETIGADMISAVVGAVRLADYIRAKGHLVSDIQPIWKTDKNSNLLDYDRFNVTEEELKKVPVKLICKDAPPHLKNGLEAIEHLKKVYTQTMAFEFGHVQDEEERNWLRKQVESEAYADELPNKEKKALLERLTSVEGFEKFIHRTFVGQKRFSIEGLDTLVPMLDKAIREVRKEKTDHVMIGMAHRGRLNVLAHTLGKPYKAIFSEFLQAPNKLNAPSEGLGETYTGWTGDVKYHLGADRQISDDKSAQTIVSLANNPSHLEFVSPIVEGYARAAQEDRSSKGAPKQDTTRAYSILIHGDAAFPGQGVVTETLNLSRLNGYHVGGSLHIIANNNIGYTTEMHDSRSTTYASDPAKGFEIPIVHVNADDAEACVRAIKFAVEYRRKFQKDFLIDLIGYRRFGHNEGDEPAVTQPDLYAQIRKHPTVRAIYAKQLEAEQVITAKEAQKLDTDMYNYLLEEYNKVNSDKSEKKYELSPPDFIVDGLPKVKTAVEKEKLVAMNEQLLDWPSSFKPNQKLEKILKRRANAFDGEGNVDWGLAEILAFASILHDGTPVRLSGQDSERGTFAHRHFVLHDRETNETHVPLQTIKDANASFAVYNSPLTEQACVGFEYGYNVFSKETLVLWEAQFGDFVNGAQVMFDQWVSAGRAKWGQKSGLVVLLPHGYEGAGPEHSSGRVERFLSSAAENNWTVANCTSAAQYFHILRRQAKILQKNTVRPLIIMTPKSLLRNQVVASPTSAFTEGEFQPILEEPTLGHDPNAVKRIILCSGKLAIELQDYVNKNDEDWSWVHIIRVEELYPFPRRAIRERLKEFPNLEEVKWVQEEPKNMGAWTFMEPRIREILPSGVPLSYIGRTYRSSPAEGVSNAHKVEQKRIVTESLTRKN</sequence>
<evidence type="ECO:0000255" key="1">
    <source>
        <dbReference type="HAMAP-Rule" id="MF_01169"/>
    </source>
</evidence>
<keyword id="KW-0324">Glycolysis</keyword>
<keyword id="KW-0560">Oxidoreductase</keyword>
<keyword id="KW-1185">Reference proteome</keyword>
<keyword id="KW-0786">Thiamine pyrophosphate</keyword>
<gene>
    <name evidence="1" type="primary">odhA</name>
    <name type="ordered locus">ABC2114</name>
</gene>
<organism>
    <name type="scientific">Shouchella clausii (strain KSM-K16)</name>
    <name type="common">Alkalihalobacillus clausii</name>
    <dbReference type="NCBI Taxonomy" id="66692"/>
    <lineage>
        <taxon>Bacteria</taxon>
        <taxon>Bacillati</taxon>
        <taxon>Bacillota</taxon>
        <taxon>Bacilli</taxon>
        <taxon>Bacillales</taxon>
        <taxon>Bacillaceae</taxon>
        <taxon>Shouchella</taxon>
    </lineage>
</organism>
<name>ODO1_SHOC1</name>
<proteinExistence type="inferred from homology"/>
<reference key="1">
    <citation type="submission" date="2003-10" db="EMBL/GenBank/DDBJ databases">
        <title>The complete genome sequence of the alkaliphilic Bacillus clausii KSM-K16.</title>
        <authorList>
            <person name="Takaki Y."/>
            <person name="Kageyama Y."/>
            <person name="Shimamura S."/>
            <person name="Suzuki H."/>
            <person name="Nishi S."/>
            <person name="Hatada Y."/>
            <person name="Kawai S."/>
            <person name="Ito S."/>
            <person name="Horikoshi K."/>
        </authorList>
    </citation>
    <scope>NUCLEOTIDE SEQUENCE [LARGE SCALE GENOMIC DNA]</scope>
    <source>
        <strain>KSM-K16</strain>
    </source>
</reference>
<accession>Q5WG56</accession>
<feature type="chain" id="PRO_0000162168" description="2-oxoglutarate dehydrogenase E1 component">
    <location>
        <begin position="1"/>
        <end position="943"/>
    </location>
</feature>